<name>SMG_SALDC</name>
<feature type="chain" id="PRO_1000129898" description="Protein Smg">
    <location>
        <begin position="1"/>
        <end position="157"/>
    </location>
</feature>
<proteinExistence type="inferred from homology"/>
<gene>
    <name evidence="1" type="primary">smg</name>
    <name type="ordered locus">SeD_A3771</name>
</gene>
<organism>
    <name type="scientific">Salmonella dublin (strain CT_02021853)</name>
    <dbReference type="NCBI Taxonomy" id="439851"/>
    <lineage>
        <taxon>Bacteria</taxon>
        <taxon>Pseudomonadati</taxon>
        <taxon>Pseudomonadota</taxon>
        <taxon>Gammaproteobacteria</taxon>
        <taxon>Enterobacterales</taxon>
        <taxon>Enterobacteriaceae</taxon>
        <taxon>Salmonella</taxon>
    </lineage>
</organism>
<dbReference type="EMBL" id="CP001144">
    <property type="protein sequence ID" value="ACH74082.1"/>
    <property type="molecule type" value="Genomic_DNA"/>
</dbReference>
<dbReference type="RefSeq" id="WP_000460663.1">
    <property type="nucleotide sequence ID" value="NC_011205.1"/>
</dbReference>
<dbReference type="SMR" id="B5FJI0"/>
<dbReference type="KEGG" id="sed:SeD_A3771"/>
<dbReference type="HOGENOM" id="CLU_133242_0_0_6"/>
<dbReference type="Proteomes" id="UP000008322">
    <property type="component" value="Chromosome"/>
</dbReference>
<dbReference type="HAMAP" id="MF_00598">
    <property type="entry name" value="Smg"/>
    <property type="match status" value="1"/>
</dbReference>
<dbReference type="InterPro" id="IPR007456">
    <property type="entry name" value="Smg"/>
</dbReference>
<dbReference type="NCBIfam" id="NF002897">
    <property type="entry name" value="PRK03430.1"/>
    <property type="match status" value="1"/>
</dbReference>
<dbReference type="PANTHER" id="PTHR38692">
    <property type="entry name" value="PROTEIN SMG"/>
    <property type="match status" value="1"/>
</dbReference>
<dbReference type="PANTHER" id="PTHR38692:SF1">
    <property type="entry name" value="PROTEIN SMG"/>
    <property type="match status" value="1"/>
</dbReference>
<dbReference type="Pfam" id="PF04361">
    <property type="entry name" value="DUF494"/>
    <property type="match status" value="1"/>
</dbReference>
<comment type="similarity">
    <text evidence="1">Belongs to the Smg family.</text>
</comment>
<protein>
    <recommendedName>
        <fullName evidence="1">Protein Smg</fullName>
    </recommendedName>
</protein>
<sequence>MFDVLMYLFETYIHNEAELRVDQDRLERDLTDAGFDREDIYNALLWLEKLADYQDGLAEPMQLASDPLSMRIYTVEECERLDASCRGFLLFLEQIQVLNLETREMVIERVLALDTAEFDLEDLKWVILMVLFNIPGCENAYQQMEELLFEVNEGMLH</sequence>
<evidence type="ECO:0000255" key="1">
    <source>
        <dbReference type="HAMAP-Rule" id="MF_00598"/>
    </source>
</evidence>
<reference key="1">
    <citation type="journal article" date="2011" name="J. Bacteriol.">
        <title>Comparative genomics of 28 Salmonella enterica isolates: evidence for CRISPR-mediated adaptive sublineage evolution.</title>
        <authorList>
            <person name="Fricke W.F."/>
            <person name="Mammel M.K."/>
            <person name="McDermott P.F."/>
            <person name="Tartera C."/>
            <person name="White D.G."/>
            <person name="Leclerc J.E."/>
            <person name="Ravel J."/>
            <person name="Cebula T.A."/>
        </authorList>
    </citation>
    <scope>NUCLEOTIDE SEQUENCE [LARGE SCALE GENOMIC DNA]</scope>
    <source>
        <strain>CT_02021853</strain>
    </source>
</reference>
<accession>B5FJI0</accession>